<comment type="function">
    <text evidence="1">The RuvA-RuvB-RuvC complex processes Holliday junction (HJ) DNA during genetic recombination and DNA repair, while the RuvA-RuvB complex plays an important role in the rescue of blocked DNA replication forks via replication fork reversal (RFR). RuvA specifically binds to HJ cruciform DNA, conferring on it an open structure. The RuvB hexamer acts as an ATP-dependent pump, pulling dsDNA into and through the RuvAB complex. RuvB forms 2 homohexamers on either side of HJ DNA bound by 1 or 2 RuvA tetramers; 4 subunits per hexamer contact DNA at a time. Coordinated motions by a converter formed by DNA-disengaged RuvB subunits stimulates ATP hydrolysis and nucleotide exchange. Immobilization of the converter enables RuvB to convert the ATP-contained energy into a lever motion, pulling 2 nucleotides of DNA out of the RuvA tetramer per ATP hydrolyzed, thus driving DNA branch migration. The RuvB motors rotate together with the DNA substrate, which together with the progressing nucleotide cycle form the mechanistic basis for DNA recombination by continuous HJ branch migration. Branch migration allows RuvC to scan DNA until it finds its consensus sequence, where it cleaves and resolves cruciform DNA.</text>
</comment>
<comment type="catalytic activity">
    <reaction evidence="1">
        <text>ATP + H2O = ADP + phosphate + H(+)</text>
        <dbReference type="Rhea" id="RHEA:13065"/>
        <dbReference type="ChEBI" id="CHEBI:15377"/>
        <dbReference type="ChEBI" id="CHEBI:15378"/>
        <dbReference type="ChEBI" id="CHEBI:30616"/>
        <dbReference type="ChEBI" id="CHEBI:43474"/>
        <dbReference type="ChEBI" id="CHEBI:456216"/>
    </reaction>
</comment>
<comment type="subunit">
    <text evidence="1">Homohexamer. Forms an RuvA(8)-RuvB(12)-Holliday junction (HJ) complex. HJ DNA is sandwiched between 2 RuvA tetramers; dsDNA enters through RuvA and exits via RuvB. An RuvB hexamer assembles on each DNA strand where it exits the tetramer. Each RuvB hexamer is contacted by two RuvA subunits (via domain III) on 2 adjacent RuvB subunits; this complex drives branch migration. In the full resolvosome a probable DNA-RuvA(4)-RuvB(12)-RuvC(2) complex forms which resolves the HJ.</text>
</comment>
<comment type="subcellular location">
    <subcellularLocation>
        <location evidence="1">Cytoplasm</location>
    </subcellularLocation>
</comment>
<comment type="domain">
    <text evidence="1">Has 3 domains, the large (RuvB-L) and small ATPase (RuvB-S) domains and the C-terminal head (RuvB-H) domain. The head domain binds DNA, while the ATPase domains jointly bind ATP, ADP or are empty depending on the state of the subunit in the translocation cycle. During a single DNA translocation step the structure of each domain remains the same, but their relative positions change.</text>
</comment>
<comment type="similarity">
    <text evidence="1">Belongs to the RuvB family.</text>
</comment>
<sequence length="363" mass="38905">MSDVERTEFEIPGGIPPRRNGGQGRAADTNVDANLKPDEYDAEVTLRPKSLTEFIGQPKVRDQLSLVLTGAKNRGVVPDHVLLSGPPGLGKTTMAMIIAQELGTSLRMTSGPALERAGDLAAMLSNLMEGDVLFIDEIHRIARPAEEMLYMAMEDFRIDVIVGKGPGATSIPLEIPPFTLVGATTRSGMLTGPLRDRFGFTAQMEFYDVPDLTKVVKRTAKILDVGIDNDAAVEIASRSRGTPRIANRLLRRVRDFAEVHADGHITMGAANAALIVFDVDEVGLDRLDRAVLDALIRGHGGGPVGVNTLAVAVGEEPGTVEEVCEPYLVRAGMIARTGRGRVATAAAWRHLGLEPPEGTIGDY</sequence>
<keyword id="KW-0067">ATP-binding</keyword>
<keyword id="KW-0963">Cytoplasm</keyword>
<keyword id="KW-0227">DNA damage</keyword>
<keyword id="KW-0233">DNA recombination</keyword>
<keyword id="KW-0234">DNA repair</keyword>
<keyword id="KW-0238">DNA-binding</keyword>
<keyword id="KW-0378">Hydrolase</keyword>
<keyword id="KW-0547">Nucleotide-binding</keyword>
<protein>
    <recommendedName>
        <fullName evidence="1">Holliday junction branch migration complex subunit RuvB</fullName>
        <ecNumber evidence="1">3.6.4.-</ecNumber>
    </recommendedName>
</protein>
<dbReference type="EC" id="3.6.4.-" evidence="1"/>
<dbReference type="EMBL" id="AP009044">
    <property type="protein sequence ID" value="BAF54699.1"/>
    <property type="molecule type" value="Genomic_DNA"/>
</dbReference>
<dbReference type="RefSeq" id="WP_003855899.1">
    <property type="nucleotide sequence ID" value="NC_009342.1"/>
</dbReference>
<dbReference type="SMR" id="A4QEN3"/>
<dbReference type="GeneID" id="1019627"/>
<dbReference type="KEGG" id="cgt:cgR_1705"/>
<dbReference type="HOGENOM" id="CLU_055599_1_0_11"/>
<dbReference type="PhylomeDB" id="A4QEN3"/>
<dbReference type="Proteomes" id="UP000006698">
    <property type="component" value="Chromosome"/>
</dbReference>
<dbReference type="GO" id="GO:0005737">
    <property type="term" value="C:cytoplasm"/>
    <property type="evidence" value="ECO:0007669"/>
    <property type="project" value="UniProtKB-SubCell"/>
</dbReference>
<dbReference type="GO" id="GO:0048476">
    <property type="term" value="C:Holliday junction resolvase complex"/>
    <property type="evidence" value="ECO:0007669"/>
    <property type="project" value="UniProtKB-UniRule"/>
</dbReference>
<dbReference type="GO" id="GO:0005524">
    <property type="term" value="F:ATP binding"/>
    <property type="evidence" value="ECO:0007669"/>
    <property type="project" value="UniProtKB-UniRule"/>
</dbReference>
<dbReference type="GO" id="GO:0016887">
    <property type="term" value="F:ATP hydrolysis activity"/>
    <property type="evidence" value="ECO:0007669"/>
    <property type="project" value="InterPro"/>
</dbReference>
<dbReference type="GO" id="GO:0000400">
    <property type="term" value="F:four-way junction DNA binding"/>
    <property type="evidence" value="ECO:0007669"/>
    <property type="project" value="UniProtKB-UniRule"/>
</dbReference>
<dbReference type="GO" id="GO:0009378">
    <property type="term" value="F:four-way junction helicase activity"/>
    <property type="evidence" value="ECO:0007669"/>
    <property type="project" value="InterPro"/>
</dbReference>
<dbReference type="GO" id="GO:0006310">
    <property type="term" value="P:DNA recombination"/>
    <property type="evidence" value="ECO:0007669"/>
    <property type="project" value="UniProtKB-UniRule"/>
</dbReference>
<dbReference type="GO" id="GO:0006281">
    <property type="term" value="P:DNA repair"/>
    <property type="evidence" value="ECO:0007669"/>
    <property type="project" value="UniProtKB-UniRule"/>
</dbReference>
<dbReference type="CDD" id="cd00009">
    <property type="entry name" value="AAA"/>
    <property type="match status" value="1"/>
</dbReference>
<dbReference type="FunFam" id="1.10.8.60:FF:000023">
    <property type="entry name" value="Holliday junction ATP-dependent DNA helicase RuvB"/>
    <property type="match status" value="1"/>
</dbReference>
<dbReference type="FunFam" id="3.40.50.300:FF:000073">
    <property type="entry name" value="Holliday junction ATP-dependent DNA helicase RuvB"/>
    <property type="match status" value="1"/>
</dbReference>
<dbReference type="Gene3D" id="1.10.8.60">
    <property type="match status" value="1"/>
</dbReference>
<dbReference type="Gene3D" id="3.40.50.300">
    <property type="entry name" value="P-loop containing nucleotide triphosphate hydrolases"/>
    <property type="match status" value="1"/>
</dbReference>
<dbReference type="Gene3D" id="1.10.10.10">
    <property type="entry name" value="Winged helix-like DNA-binding domain superfamily/Winged helix DNA-binding domain"/>
    <property type="match status" value="1"/>
</dbReference>
<dbReference type="HAMAP" id="MF_00016">
    <property type="entry name" value="DNA_HJ_migration_RuvB"/>
    <property type="match status" value="1"/>
</dbReference>
<dbReference type="InterPro" id="IPR003593">
    <property type="entry name" value="AAA+_ATPase"/>
</dbReference>
<dbReference type="InterPro" id="IPR041445">
    <property type="entry name" value="AAA_lid_4"/>
</dbReference>
<dbReference type="InterPro" id="IPR004605">
    <property type="entry name" value="DNA_helicase_Holl-junc_RuvB"/>
</dbReference>
<dbReference type="InterPro" id="IPR027417">
    <property type="entry name" value="P-loop_NTPase"/>
</dbReference>
<dbReference type="InterPro" id="IPR008824">
    <property type="entry name" value="RuvB-like_N"/>
</dbReference>
<dbReference type="InterPro" id="IPR008823">
    <property type="entry name" value="RuvB_C"/>
</dbReference>
<dbReference type="InterPro" id="IPR036388">
    <property type="entry name" value="WH-like_DNA-bd_sf"/>
</dbReference>
<dbReference type="InterPro" id="IPR036390">
    <property type="entry name" value="WH_DNA-bd_sf"/>
</dbReference>
<dbReference type="NCBIfam" id="NF000868">
    <property type="entry name" value="PRK00080.1"/>
    <property type="match status" value="1"/>
</dbReference>
<dbReference type="NCBIfam" id="TIGR00635">
    <property type="entry name" value="ruvB"/>
    <property type="match status" value="1"/>
</dbReference>
<dbReference type="PANTHER" id="PTHR42848">
    <property type="match status" value="1"/>
</dbReference>
<dbReference type="PANTHER" id="PTHR42848:SF1">
    <property type="entry name" value="HOLLIDAY JUNCTION BRANCH MIGRATION COMPLEX SUBUNIT RUVB"/>
    <property type="match status" value="1"/>
</dbReference>
<dbReference type="Pfam" id="PF17864">
    <property type="entry name" value="AAA_lid_4"/>
    <property type="match status" value="1"/>
</dbReference>
<dbReference type="Pfam" id="PF05491">
    <property type="entry name" value="RuvB_C"/>
    <property type="match status" value="1"/>
</dbReference>
<dbReference type="Pfam" id="PF05496">
    <property type="entry name" value="RuvB_N"/>
    <property type="match status" value="1"/>
</dbReference>
<dbReference type="SMART" id="SM00382">
    <property type="entry name" value="AAA"/>
    <property type="match status" value="1"/>
</dbReference>
<dbReference type="SUPFAM" id="SSF52540">
    <property type="entry name" value="P-loop containing nucleoside triphosphate hydrolases"/>
    <property type="match status" value="1"/>
</dbReference>
<dbReference type="SUPFAM" id="SSF46785">
    <property type="entry name" value="Winged helix' DNA-binding domain"/>
    <property type="match status" value="1"/>
</dbReference>
<feature type="chain" id="PRO_0000322790" description="Holliday junction branch migration complex subunit RuvB">
    <location>
        <begin position="1"/>
        <end position="363"/>
    </location>
</feature>
<feature type="region of interest" description="Disordered" evidence="2">
    <location>
        <begin position="1"/>
        <end position="32"/>
    </location>
</feature>
<feature type="region of interest" description="Large ATPase domain (RuvB-L)" evidence="1">
    <location>
        <begin position="27"/>
        <end position="207"/>
    </location>
</feature>
<feature type="region of interest" description="Small ATPAse domain (RuvB-S)" evidence="1">
    <location>
        <begin position="208"/>
        <end position="278"/>
    </location>
</feature>
<feature type="region of interest" description="Head domain (RuvB-H)" evidence="1">
    <location>
        <begin position="281"/>
        <end position="363"/>
    </location>
</feature>
<feature type="binding site" evidence="1">
    <location>
        <position position="46"/>
    </location>
    <ligand>
        <name>ATP</name>
        <dbReference type="ChEBI" id="CHEBI:30616"/>
    </ligand>
</feature>
<feature type="binding site" evidence="1">
    <location>
        <position position="47"/>
    </location>
    <ligand>
        <name>ATP</name>
        <dbReference type="ChEBI" id="CHEBI:30616"/>
    </ligand>
</feature>
<feature type="binding site" evidence="1">
    <location>
        <position position="88"/>
    </location>
    <ligand>
        <name>ATP</name>
        <dbReference type="ChEBI" id="CHEBI:30616"/>
    </ligand>
</feature>
<feature type="binding site" evidence="1">
    <location>
        <position position="91"/>
    </location>
    <ligand>
        <name>ATP</name>
        <dbReference type="ChEBI" id="CHEBI:30616"/>
    </ligand>
</feature>
<feature type="binding site" evidence="1">
    <location>
        <position position="92"/>
    </location>
    <ligand>
        <name>ATP</name>
        <dbReference type="ChEBI" id="CHEBI:30616"/>
    </ligand>
</feature>
<feature type="binding site" evidence="1">
    <location>
        <position position="92"/>
    </location>
    <ligand>
        <name>Mg(2+)</name>
        <dbReference type="ChEBI" id="CHEBI:18420"/>
    </ligand>
</feature>
<feature type="binding site" evidence="1">
    <location>
        <position position="93"/>
    </location>
    <ligand>
        <name>ATP</name>
        <dbReference type="ChEBI" id="CHEBI:30616"/>
    </ligand>
</feature>
<feature type="binding site" evidence="1">
    <location>
        <begin position="154"/>
        <end position="156"/>
    </location>
    <ligand>
        <name>ATP</name>
        <dbReference type="ChEBI" id="CHEBI:30616"/>
    </ligand>
</feature>
<feature type="binding site" evidence="1">
    <location>
        <position position="197"/>
    </location>
    <ligand>
        <name>ATP</name>
        <dbReference type="ChEBI" id="CHEBI:30616"/>
    </ligand>
</feature>
<feature type="binding site" evidence="1">
    <location>
        <position position="207"/>
    </location>
    <ligand>
        <name>ATP</name>
        <dbReference type="ChEBI" id="CHEBI:30616"/>
    </ligand>
</feature>
<feature type="binding site" evidence="1">
    <location>
        <position position="244"/>
    </location>
    <ligand>
        <name>ATP</name>
        <dbReference type="ChEBI" id="CHEBI:30616"/>
    </ligand>
</feature>
<feature type="binding site" evidence="1">
    <location>
        <position position="336"/>
    </location>
    <ligand>
        <name>DNA</name>
        <dbReference type="ChEBI" id="CHEBI:16991"/>
    </ligand>
</feature>
<feature type="binding site" evidence="1">
    <location>
        <position position="341"/>
    </location>
    <ligand>
        <name>DNA</name>
        <dbReference type="ChEBI" id="CHEBI:16991"/>
    </ligand>
</feature>
<organism>
    <name type="scientific">Corynebacterium glutamicum (strain R)</name>
    <dbReference type="NCBI Taxonomy" id="340322"/>
    <lineage>
        <taxon>Bacteria</taxon>
        <taxon>Bacillati</taxon>
        <taxon>Actinomycetota</taxon>
        <taxon>Actinomycetes</taxon>
        <taxon>Mycobacteriales</taxon>
        <taxon>Corynebacteriaceae</taxon>
        <taxon>Corynebacterium</taxon>
    </lineage>
</organism>
<name>RUVB_CORGB</name>
<accession>A4QEN3</accession>
<proteinExistence type="inferred from homology"/>
<gene>
    <name evidence="1" type="primary">ruvB</name>
    <name type="ordered locus">cgR_1705</name>
</gene>
<reference key="1">
    <citation type="journal article" date="2007" name="Microbiology">
        <title>Comparative analysis of the Corynebacterium glutamicum group and complete genome sequence of strain R.</title>
        <authorList>
            <person name="Yukawa H."/>
            <person name="Omumasaba C.A."/>
            <person name="Nonaka H."/>
            <person name="Kos P."/>
            <person name="Okai N."/>
            <person name="Suzuki N."/>
            <person name="Suda M."/>
            <person name="Tsuge Y."/>
            <person name="Watanabe J."/>
            <person name="Ikeda Y."/>
            <person name="Vertes A.A."/>
            <person name="Inui M."/>
        </authorList>
    </citation>
    <scope>NUCLEOTIDE SEQUENCE [LARGE SCALE GENOMIC DNA]</scope>
    <source>
        <strain>R</strain>
    </source>
</reference>
<evidence type="ECO:0000255" key="1">
    <source>
        <dbReference type="HAMAP-Rule" id="MF_00016"/>
    </source>
</evidence>
<evidence type="ECO:0000256" key="2">
    <source>
        <dbReference type="SAM" id="MobiDB-lite"/>
    </source>
</evidence>